<name>PROV_ECOLI</name>
<organism>
    <name type="scientific">Escherichia coli (strain K12)</name>
    <dbReference type="NCBI Taxonomy" id="83333"/>
    <lineage>
        <taxon>Bacteria</taxon>
        <taxon>Pseudomonadati</taxon>
        <taxon>Pseudomonadota</taxon>
        <taxon>Gammaproteobacteria</taxon>
        <taxon>Enterobacterales</taxon>
        <taxon>Enterobacteriaceae</taxon>
        <taxon>Escherichia</taxon>
    </lineage>
</organism>
<gene>
    <name evidence="7" type="primary">proV</name>
    <name type="ordered locus">b2677</name>
    <name type="ordered locus">JW2652</name>
</gene>
<comment type="function">
    <text evidence="4 5 6 8">Part of the ProU ABC transporter complex involved in glycine betaine and proline betaine uptake (PubMed:23249124, PubMed:3305496, PubMed:7898450). Probably responsible for energy coupling to the transport system (Probable).</text>
</comment>
<comment type="subunit">
    <text evidence="4">The complex is composed of two ATP-binding proteins (ProV), two transmembrane proteins (ProW) and a solute-binding protein (ProX).</text>
</comment>
<comment type="interaction">
    <interactant intactId="EBI-546797">
        <id>P14175</id>
    </interactant>
    <interactant intactId="EBI-8794761">
        <id>P14176</id>
        <label>proW</label>
    </interactant>
    <organismsDiffer>false</organismsDiffer>
    <experiments>2</experiments>
</comment>
<comment type="subcellular location">
    <subcellularLocation>
        <location evidence="3">Cell inner membrane</location>
        <topology evidence="3">Peripheral membrane protein</topology>
    </subcellularLocation>
</comment>
<comment type="similarity">
    <text evidence="8">Belongs to the ABC transporter superfamily.</text>
</comment>
<dbReference type="EMBL" id="M24856">
    <property type="protein sequence ID" value="AAA24427.1"/>
    <property type="molecule type" value="Genomic_DNA"/>
</dbReference>
<dbReference type="EMBL" id="U00096">
    <property type="protein sequence ID" value="AAC75724.1"/>
    <property type="molecule type" value="Genomic_DNA"/>
</dbReference>
<dbReference type="EMBL" id="AP009048">
    <property type="protein sequence ID" value="BAA16542.1"/>
    <property type="molecule type" value="Genomic_DNA"/>
</dbReference>
<dbReference type="EMBL" id="X52694">
    <property type="protein sequence ID" value="CAA36923.1"/>
    <property type="molecule type" value="Genomic_DNA"/>
</dbReference>
<dbReference type="PIR" id="JS0128">
    <property type="entry name" value="BVECPV"/>
</dbReference>
<dbReference type="RefSeq" id="NP_417163.1">
    <property type="nucleotide sequence ID" value="NC_000913.3"/>
</dbReference>
<dbReference type="RefSeq" id="WP_000985494.1">
    <property type="nucleotide sequence ID" value="NZ_STEB01000042.1"/>
</dbReference>
<dbReference type="SMR" id="P14175"/>
<dbReference type="BioGRID" id="4262264">
    <property type="interactions" value="25"/>
</dbReference>
<dbReference type="BioGRID" id="851480">
    <property type="interactions" value="2"/>
</dbReference>
<dbReference type="ComplexPortal" id="CPX-2126">
    <property type="entry name" value="Glycine/Proline betaine ABC transporter complex"/>
</dbReference>
<dbReference type="DIP" id="DIP-10574N"/>
<dbReference type="FunCoup" id="P14175">
    <property type="interactions" value="321"/>
</dbReference>
<dbReference type="IntAct" id="P14175">
    <property type="interactions" value="6"/>
</dbReference>
<dbReference type="STRING" id="511145.b2677"/>
<dbReference type="TCDB" id="3.A.1.12.1">
    <property type="family name" value="the atp-binding cassette (abc) superfamily"/>
</dbReference>
<dbReference type="jPOST" id="P14175"/>
<dbReference type="PaxDb" id="511145-b2677"/>
<dbReference type="EnsemblBacteria" id="AAC75724">
    <property type="protein sequence ID" value="AAC75724"/>
    <property type="gene ID" value="b2677"/>
</dbReference>
<dbReference type="GeneID" id="75205920"/>
<dbReference type="GeneID" id="947148"/>
<dbReference type="KEGG" id="ecj:JW2652"/>
<dbReference type="KEGG" id="eco:b2677"/>
<dbReference type="KEGG" id="ecoc:C3026_14750"/>
<dbReference type="PATRIC" id="fig|1411691.4.peg.4064"/>
<dbReference type="EchoBASE" id="EB0764"/>
<dbReference type="eggNOG" id="COG4175">
    <property type="taxonomic scope" value="Bacteria"/>
</dbReference>
<dbReference type="HOGENOM" id="CLU_000604_2_2_6"/>
<dbReference type="InParanoid" id="P14175"/>
<dbReference type="OMA" id="GQIFVVM"/>
<dbReference type="OrthoDB" id="9802264at2"/>
<dbReference type="PhylomeDB" id="P14175"/>
<dbReference type="BioCyc" id="EcoCyc:PROV-MONOMER"/>
<dbReference type="BioCyc" id="MetaCyc:PROV-MONOMER"/>
<dbReference type="PRO" id="PR:P14175"/>
<dbReference type="Proteomes" id="UP000000625">
    <property type="component" value="Chromosome"/>
</dbReference>
<dbReference type="GO" id="GO:0043190">
    <property type="term" value="C:ATP-binding cassette (ABC) transporter complex"/>
    <property type="evidence" value="ECO:0000255"/>
    <property type="project" value="EcoCyc"/>
</dbReference>
<dbReference type="GO" id="GO:0016020">
    <property type="term" value="C:membrane"/>
    <property type="evidence" value="ECO:0000314"/>
    <property type="project" value="ComplexPortal"/>
</dbReference>
<dbReference type="GO" id="GO:1990222">
    <property type="term" value="C:ProVWX complex"/>
    <property type="evidence" value="ECO:0000353"/>
    <property type="project" value="ComplexPortal"/>
</dbReference>
<dbReference type="GO" id="GO:0005275">
    <property type="term" value="F:amine transmembrane transporter activity"/>
    <property type="evidence" value="ECO:0000314"/>
    <property type="project" value="EcoCyc"/>
</dbReference>
<dbReference type="GO" id="GO:0005524">
    <property type="term" value="F:ATP binding"/>
    <property type="evidence" value="ECO:0000255"/>
    <property type="project" value="EcoCyc"/>
</dbReference>
<dbReference type="GO" id="GO:0016887">
    <property type="term" value="F:ATP hydrolysis activity"/>
    <property type="evidence" value="ECO:0007669"/>
    <property type="project" value="InterPro"/>
</dbReference>
<dbReference type="GO" id="GO:0005034">
    <property type="term" value="F:osmosensor activity"/>
    <property type="evidence" value="ECO:0000255"/>
    <property type="project" value="EcoCyc"/>
</dbReference>
<dbReference type="GO" id="GO:0089718">
    <property type="term" value="P:amino acid import across plasma membrane"/>
    <property type="evidence" value="ECO:0000314"/>
    <property type="project" value="ComplexPortal"/>
</dbReference>
<dbReference type="GO" id="GO:0071470">
    <property type="term" value="P:cellular response to osmotic stress"/>
    <property type="evidence" value="ECO:0000314"/>
    <property type="project" value="ComplexPortal"/>
</dbReference>
<dbReference type="GO" id="GO:0031460">
    <property type="term" value="P:glycine betaine transport"/>
    <property type="evidence" value="ECO:0000314"/>
    <property type="project" value="ComplexPortal"/>
</dbReference>
<dbReference type="GO" id="GO:1903804">
    <property type="term" value="P:glycine import across plasma membrane"/>
    <property type="evidence" value="ECO:0000314"/>
    <property type="project" value="ComplexPortal"/>
</dbReference>
<dbReference type="GO" id="GO:0006972">
    <property type="term" value="P:hyperosmotic response"/>
    <property type="evidence" value="ECO:0000314"/>
    <property type="project" value="EcoCyc"/>
</dbReference>
<dbReference type="CDD" id="cd03294">
    <property type="entry name" value="ABC_Pro_Gly_Betaine"/>
    <property type="match status" value="1"/>
</dbReference>
<dbReference type="CDD" id="cd09831">
    <property type="entry name" value="CBS_pair_ABC_Gly_Pro_assoc"/>
    <property type="match status" value="1"/>
</dbReference>
<dbReference type="FunFam" id="3.10.580.10:FF:000009">
    <property type="entry name" value="Glycine betaine/L-proline ABC transporter ATP-binding protein"/>
    <property type="match status" value="1"/>
</dbReference>
<dbReference type="FunFam" id="3.40.50.300:FF:000201">
    <property type="entry name" value="Glycine betaine/L-proline ABC transporter ATP-binding protein"/>
    <property type="match status" value="1"/>
</dbReference>
<dbReference type="Gene3D" id="3.10.580.10">
    <property type="entry name" value="CBS-domain"/>
    <property type="match status" value="1"/>
</dbReference>
<dbReference type="Gene3D" id="3.40.50.300">
    <property type="entry name" value="P-loop containing nucleotide triphosphate hydrolases"/>
    <property type="match status" value="1"/>
</dbReference>
<dbReference type="InterPro" id="IPR003593">
    <property type="entry name" value="AAA+_ATPase"/>
</dbReference>
<dbReference type="InterPro" id="IPR051921">
    <property type="entry name" value="ABC_osmolyte_uptake_ATP-bind"/>
</dbReference>
<dbReference type="InterPro" id="IPR003439">
    <property type="entry name" value="ABC_transporter-like_ATP-bd"/>
</dbReference>
<dbReference type="InterPro" id="IPR017871">
    <property type="entry name" value="ABC_transporter-like_CS"/>
</dbReference>
<dbReference type="InterPro" id="IPR000644">
    <property type="entry name" value="CBS_dom"/>
</dbReference>
<dbReference type="InterPro" id="IPR046342">
    <property type="entry name" value="CBS_dom_sf"/>
</dbReference>
<dbReference type="InterPro" id="IPR005892">
    <property type="entry name" value="Gly-betaine_transp_ATP-bd"/>
</dbReference>
<dbReference type="InterPro" id="IPR027417">
    <property type="entry name" value="P-loop_NTPase"/>
</dbReference>
<dbReference type="NCBIfam" id="NF007480">
    <property type="entry name" value="PRK10070.1"/>
    <property type="match status" value="1"/>
</dbReference>
<dbReference type="NCBIfam" id="TIGR01186">
    <property type="entry name" value="proV"/>
    <property type="match status" value="1"/>
</dbReference>
<dbReference type="PANTHER" id="PTHR43869">
    <property type="entry name" value="GLYCINE BETAINE/PROLINE BETAINE TRANSPORT SYSTEM ATP-BINDING PROTEIN PROV"/>
    <property type="match status" value="1"/>
</dbReference>
<dbReference type="PANTHER" id="PTHR43869:SF1">
    <property type="entry name" value="GLYCINE BETAINE_PROLINE BETAINE TRANSPORT SYSTEM ATP-BINDING PROTEIN PROV"/>
    <property type="match status" value="1"/>
</dbReference>
<dbReference type="Pfam" id="PF00005">
    <property type="entry name" value="ABC_tran"/>
    <property type="match status" value="1"/>
</dbReference>
<dbReference type="Pfam" id="PF00571">
    <property type="entry name" value="CBS"/>
    <property type="match status" value="1"/>
</dbReference>
<dbReference type="SMART" id="SM00382">
    <property type="entry name" value="AAA"/>
    <property type="match status" value="1"/>
</dbReference>
<dbReference type="SUPFAM" id="SSF54631">
    <property type="entry name" value="CBS-domain pair"/>
    <property type="match status" value="1"/>
</dbReference>
<dbReference type="SUPFAM" id="SSF52540">
    <property type="entry name" value="P-loop containing nucleoside triphosphate hydrolases"/>
    <property type="match status" value="1"/>
</dbReference>
<dbReference type="PROSITE" id="PS00211">
    <property type="entry name" value="ABC_TRANSPORTER_1"/>
    <property type="match status" value="1"/>
</dbReference>
<dbReference type="PROSITE" id="PS50893">
    <property type="entry name" value="ABC_TRANSPORTER_2"/>
    <property type="match status" value="1"/>
</dbReference>
<dbReference type="PROSITE" id="PS51371">
    <property type="entry name" value="CBS"/>
    <property type="match status" value="2"/>
</dbReference>
<evidence type="ECO:0000255" key="1">
    <source>
        <dbReference type="PROSITE-ProRule" id="PRU00434"/>
    </source>
</evidence>
<evidence type="ECO:0000255" key="2">
    <source>
        <dbReference type="PROSITE-ProRule" id="PRU00703"/>
    </source>
</evidence>
<evidence type="ECO:0000269" key="3">
    <source>
    </source>
</evidence>
<evidence type="ECO:0000269" key="4">
    <source>
    </source>
</evidence>
<evidence type="ECO:0000269" key="5">
    <source>
    </source>
</evidence>
<evidence type="ECO:0000269" key="6">
    <source>
    </source>
</evidence>
<evidence type="ECO:0000303" key="7">
    <source>
    </source>
</evidence>
<evidence type="ECO:0000305" key="8"/>
<keyword id="KW-0029">Amino-acid transport</keyword>
<keyword id="KW-0067">ATP-binding</keyword>
<keyword id="KW-0129">CBS domain</keyword>
<keyword id="KW-0997">Cell inner membrane</keyword>
<keyword id="KW-1003">Cell membrane</keyword>
<keyword id="KW-0472">Membrane</keyword>
<keyword id="KW-0547">Nucleotide-binding</keyword>
<keyword id="KW-1185">Reference proteome</keyword>
<keyword id="KW-0677">Repeat</keyword>
<keyword id="KW-0813">Transport</keyword>
<sequence>MAIKLEIKNLYKIFGEHPQRAFKYIEQGLSKEQILEKTGLSLGVKDASLAIEEGEIFVIMGLSGSGKSTMVRLLNRLIEPTRGQVLIDGVDIAKISDAELREVRRKKIAMVFQSFALMPHMTVLDNTAFGMELAGINAEERREKALDALRQVGLENYAHSYPDELSGGMRQRVGLARALAINPDILLMDEAFSALDPLIRTEMQDELVKLQAKHQRTIVFISHDLDEAMRIGDRIAIMQNGEVVQVGTPDEILNNPANDYVRTFFRGVDISQVFSAKDIARRTPNGLIRKTPGFGPRSALKLLQDEDREYGYVIERGNKFVGAVSIDSLKTALTQQQGLDAALIDAPLAVDAQTPLSELLSHVGQAPCAVPVVDEDQQYVGIISKGMLLRALDREGVNNG</sequence>
<protein>
    <recommendedName>
        <fullName evidence="8">Glycine betaine/proline betaine transport system ATP-binding protein ProV</fullName>
    </recommendedName>
</protein>
<feature type="chain" id="PRO_0000092761" description="Glycine betaine/proline betaine transport system ATP-binding protein ProV">
    <location>
        <begin position="1"/>
        <end position="400"/>
    </location>
</feature>
<feature type="domain" description="ABC transporter" evidence="1">
    <location>
        <begin position="29"/>
        <end position="265"/>
    </location>
</feature>
<feature type="domain" description="CBS 1" evidence="2">
    <location>
        <begin position="282"/>
        <end position="341"/>
    </location>
</feature>
<feature type="domain" description="CBS 2" evidence="2">
    <location>
        <begin position="343"/>
        <end position="400"/>
    </location>
</feature>
<feature type="binding site" evidence="1">
    <location>
        <begin position="61"/>
        <end position="68"/>
    </location>
    <ligand>
        <name>ATP</name>
        <dbReference type="ChEBI" id="CHEBI:30616"/>
    </ligand>
</feature>
<reference key="1">
    <citation type="journal article" date="1989" name="J. Bacteriol.">
        <title>Nucleotide sequence of the osmoregulatory proU operon of Escherichia coli.</title>
        <authorList>
            <person name="Gowrishankar J."/>
        </authorList>
    </citation>
    <scope>NUCLEOTIDE SEQUENCE [GENOMIC DNA]</scope>
</reference>
<reference key="2">
    <citation type="journal article" date="1990" name="J. Bacteriol.">
        <authorList>
            <person name="Gowrishankar J."/>
        </authorList>
    </citation>
    <scope>ERRATUM OF PUBMED:2649479</scope>
</reference>
<reference key="3">
    <citation type="journal article" date="1997" name="DNA Res.">
        <title>Construction of a contiguous 874-kb sequence of the Escherichia coli-K12 genome corresponding to 50.0-68.8 min on the linkage map and analysis of its sequence features.</title>
        <authorList>
            <person name="Yamamoto Y."/>
            <person name="Aiba H."/>
            <person name="Baba T."/>
            <person name="Hayashi K."/>
            <person name="Inada T."/>
            <person name="Isono K."/>
            <person name="Itoh T."/>
            <person name="Kimura S."/>
            <person name="Kitagawa M."/>
            <person name="Makino K."/>
            <person name="Miki T."/>
            <person name="Mitsuhashi N."/>
            <person name="Mizobuchi K."/>
            <person name="Mori H."/>
            <person name="Nakade S."/>
            <person name="Nakamura Y."/>
            <person name="Nashimoto H."/>
            <person name="Oshima T."/>
            <person name="Oyama S."/>
            <person name="Saito N."/>
            <person name="Sampei G."/>
            <person name="Satoh Y."/>
            <person name="Sivasundaram S."/>
            <person name="Tagami H."/>
            <person name="Takahashi H."/>
            <person name="Takeda J."/>
            <person name="Takemoto K."/>
            <person name="Uehara K."/>
            <person name="Wada C."/>
            <person name="Yamagata S."/>
            <person name="Horiuchi T."/>
        </authorList>
    </citation>
    <scope>NUCLEOTIDE SEQUENCE [LARGE SCALE GENOMIC DNA]</scope>
    <source>
        <strain>K12 / W3110 / ATCC 27325 / DSM 5911</strain>
    </source>
</reference>
<reference key="4">
    <citation type="journal article" date="1997" name="Science">
        <title>The complete genome sequence of Escherichia coli K-12.</title>
        <authorList>
            <person name="Blattner F.R."/>
            <person name="Plunkett G. III"/>
            <person name="Bloch C.A."/>
            <person name="Perna N.T."/>
            <person name="Burland V."/>
            <person name="Riley M."/>
            <person name="Collado-Vides J."/>
            <person name="Glasner J.D."/>
            <person name="Rode C.K."/>
            <person name="Mayhew G.F."/>
            <person name="Gregor J."/>
            <person name="Davis N.W."/>
            <person name="Kirkpatrick H.A."/>
            <person name="Goeden M.A."/>
            <person name="Rose D.J."/>
            <person name="Mau B."/>
            <person name="Shao Y."/>
        </authorList>
    </citation>
    <scope>NUCLEOTIDE SEQUENCE [LARGE SCALE GENOMIC DNA]</scope>
    <source>
        <strain>K12 / MG1655 / ATCC 47076</strain>
    </source>
</reference>
<reference key="5">
    <citation type="journal article" date="2006" name="Mol. Syst. Biol.">
        <title>Highly accurate genome sequences of Escherichia coli K-12 strains MG1655 and W3110.</title>
        <authorList>
            <person name="Hayashi K."/>
            <person name="Morooka N."/>
            <person name="Yamamoto Y."/>
            <person name="Fujita K."/>
            <person name="Isono K."/>
            <person name="Choi S."/>
            <person name="Ohtsubo E."/>
            <person name="Baba T."/>
            <person name="Wanner B.L."/>
            <person name="Mori H."/>
            <person name="Horiuchi T."/>
        </authorList>
    </citation>
    <scope>NUCLEOTIDE SEQUENCE [LARGE SCALE GENOMIC DNA]</scope>
    <source>
        <strain>K12 / W3110 / ATCC 27325 / DSM 5911</strain>
    </source>
</reference>
<reference key="6">
    <citation type="journal article" date="1989" name="Mol. Microbiol.">
        <title>Molecular characterization of the proU loci of Salmonella typhimurium and Escherichia coli encoding osmoregulated glycine betaine transport systems.</title>
        <authorList>
            <person name="Stirling D.A."/>
            <person name="Hulton C.S.J."/>
            <person name="Waddell L."/>
            <person name="Park S.F."/>
            <person name="Stewart G.S.A.B."/>
            <person name="Booth I.R."/>
            <person name="Higgins C.F."/>
        </authorList>
    </citation>
    <scope>NUCLEOTIDE SEQUENCE [GENOMIC DNA] OF 1-224</scope>
    <source>
        <strain>K12</strain>
    </source>
</reference>
<reference key="7">
    <citation type="journal article" date="1987" name="J. Biol. Chem.">
        <title>Purification and characterization of a glycine betaine binding protein from Escherichia coli.</title>
        <authorList>
            <person name="Barron A."/>
            <person name="Jung J.U."/>
            <person name="Villarejo W."/>
        </authorList>
    </citation>
    <scope>FUNCTION IN GLYCINE BETAINE TRANSPORT</scope>
</reference>
<reference key="8">
    <citation type="journal article" date="1995" name="Mol. Gen. Genet.">
        <title>The osmoprotectant proline betaine is a major substrate for the binding-protein-dependent transport system ProU of Escherichia coli K-12.</title>
        <authorList>
            <person name="Haardt M."/>
            <person name="Kempf B."/>
            <person name="Faatz E."/>
            <person name="Bremer E."/>
        </authorList>
    </citation>
    <scope>FUNCTION IN PROLINE BETAINE TRANSPORT</scope>
</reference>
<reference key="9">
    <citation type="journal article" date="1997" name="Electrophoresis">
        <title>Escherichia coli proteome analysis using the gene-protein database.</title>
        <authorList>
            <person name="VanBogelen R.A."/>
            <person name="Abshire K.Z."/>
            <person name="Moldover B."/>
            <person name="Olson E.R."/>
            <person name="Neidhardt F.C."/>
        </authorList>
    </citation>
    <scope>IDENTIFICATION BY 2D-GEL</scope>
</reference>
<reference key="10">
    <citation type="journal article" date="2005" name="J. Biol. Chem.">
        <title>Protein complexes of the Escherichia coli cell envelope.</title>
        <authorList>
            <person name="Stenberg F."/>
            <person name="Chovanec P."/>
            <person name="Maslen S.L."/>
            <person name="Robinson C.V."/>
            <person name="Ilag L."/>
            <person name="von Heijne G."/>
            <person name="Daley D.O."/>
        </authorList>
    </citation>
    <scope>SUBCELLULAR LOCATION</scope>
    <source>
        <strain>BL21-DE3</strain>
    </source>
</reference>
<reference key="11">
    <citation type="journal article" date="2013" name="Mol. Membr. Biol.">
        <title>Functional reconstitution and osmoregulatory properties of the ProU ABC transporter from Escherichia coli.</title>
        <authorList>
            <person name="Gul N."/>
            <person name="Poolman B."/>
        </authorList>
    </citation>
    <scope>FUNCTION IN GLYCINE BETAINE TRANSPORT</scope>
    <scope>SUBUNIT</scope>
    <source>
        <strain>K12</strain>
    </source>
</reference>
<proteinExistence type="evidence at protein level"/>
<accession>P14175</accession>